<sequence length="716" mass="76716">MIYQSPTIQVELLEDNIAKLCFNAPGSVNKFDRETLASLDAALDSIKQNSNIKALVLTSSKDTFIVGADITEFLGLFAQDDAVLLSWVEQANAVFNKLEDLPFPTASAIKGFALGGGCETILATDFRIADTTAKIGLPETKLGIIPGFGGTVRLPRVIGADNALEWISTGNDQRAEDALKVGAVDAVVAPEALEAAAIQMLKDAVAEKLDWQARRNRKLSALTLPKLEAMMSFTTAKGMVFAVAGKHYPAPMAAVSVIEQASTKGRAEALQIEHQAFIKLAKTDVAKALIGIFLNDQLVKGKAKKAGKLAKEVKNAAVLGAGIMGGGIAYQSASKGTPIVMKDIAQPALDLGLNEAAKLLSAQVARGRSTPEKMAKVLNNITPSLDYAALKHSDVVVEAVVEHPKIKAQVLAEVEGYVSEDAIIASNTSTISINLLAKSMKKPERFCGMHFFNPVHKMPLVEVIRGEHSSEETIASVVAYASKMGKTPIVVNDCPGFFVNRVLFPYFAGFNGLLAEGGDFAAIDKVMEKQFGWPMGPAYLLDVVGLDTGHHAQAVMAEGFPDRMGKSGTDAIDVMFENKRLGQKNGKGFYVYSVDSRGKPKKDVDPTSYGLLKDAFGELKTFEADDIIARTMIPMIIETVRCLEEGIVASPAEADMGLVYGLGFPPFRGGVFRYLDTMGVANFVALADKYAHLGGLYQVTDAMRTKATNNGSYYQA</sequence>
<reference key="1">
    <citation type="submission" date="2007-04" db="EMBL/GenBank/DDBJ databases">
        <title>Complete sequence of Shewanella putrefaciens CN-32.</title>
        <authorList>
            <consortium name="US DOE Joint Genome Institute"/>
            <person name="Copeland A."/>
            <person name="Lucas S."/>
            <person name="Lapidus A."/>
            <person name="Barry K."/>
            <person name="Detter J.C."/>
            <person name="Glavina del Rio T."/>
            <person name="Hammon N."/>
            <person name="Israni S."/>
            <person name="Dalin E."/>
            <person name="Tice H."/>
            <person name="Pitluck S."/>
            <person name="Chain P."/>
            <person name="Malfatti S."/>
            <person name="Shin M."/>
            <person name="Vergez L."/>
            <person name="Schmutz J."/>
            <person name="Larimer F."/>
            <person name="Land M."/>
            <person name="Hauser L."/>
            <person name="Kyrpides N."/>
            <person name="Mikhailova N."/>
            <person name="Romine M.F."/>
            <person name="Fredrickson J."/>
            <person name="Tiedje J."/>
            <person name="Richardson P."/>
        </authorList>
    </citation>
    <scope>NUCLEOTIDE SEQUENCE [LARGE SCALE GENOMIC DNA]</scope>
    <source>
        <strain>CN-32 / ATCC BAA-453</strain>
    </source>
</reference>
<name>FADB_SHEPC</name>
<dbReference type="EC" id="4.2.1.17" evidence="1"/>
<dbReference type="EC" id="5.1.2.3" evidence="1"/>
<dbReference type="EC" id="5.3.3.8" evidence="1"/>
<dbReference type="EC" id="1.1.1.35" evidence="1"/>
<dbReference type="EMBL" id="CP000681">
    <property type="protein sequence ID" value="ABP73749.1"/>
    <property type="molecule type" value="Genomic_DNA"/>
</dbReference>
<dbReference type="SMR" id="A4Y1B6"/>
<dbReference type="STRING" id="319224.Sputcn32_0013"/>
<dbReference type="KEGG" id="spc:Sputcn32_0013"/>
<dbReference type="eggNOG" id="COG1024">
    <property type="taxonomic scope" value="Bacteria"/>
</dbReference>
<dbReference type="eggNOG" id="COG1250">
    <property type="taxonomic scope" value="Bacteria"/>
</dbReference>
<dbReference type="HOGENOM" id="CLU_009834_16_3_6"/>
<dbReference type="UniPathway" id="UPA00659"/>
<dbReference type="GO" id="GO:0036125">
    <property type="term" value="C:fatty acid beta-oxidation multienzyme complex"/>
    <property type="evidence" value="ECO:0007669"/>
    <property type="project" value="InterPro"/>
</dbReference>
<dbReference type="GO" id="GO:0008692">
    <property type="term" value="F:3-hydroxybutyryl-CoA epimerase activity"/>
    <property type="evidence" value="ECO:0007669"/>
    <property type="project" value="UniProtKB-UniRule"/>
</dbReference>
<dbReference type="GO" id="GO:0004165">
    <property type="term" value="F:delta(3)-delta(2)-enoyl-CoA isomerase activity"/>
    <property type="evidence" value="ECO:0007669"/>
    <property type="project" value="UniProtKB-UniRule"/>
</dbReference>
<dbReference type="GO" id="GO:0004300">
    <property type="term" value="F:enoyl-CoA hydratase activity"/>
    <property type="evidence" value="ECO:0007669"/>
    <property type="project" value="UniProtKB-UniRule"/>
</dbReference>
<dbReference type="GO" id="GO:0016509">
    <property type="term" value="F:long-chain-3-hydroxyacyl-CoA dehydrogenase activity"/>
    <property type="evidence" value="ECO:0007669"/>
    <property type="project" value="TreeGrafter"/>
</dbReference>
<dbReference type="GO" id="GO:0070403">
    <property type="term" value="F:NAD+ binding"/>
    <property type="evidence" value="ECO:0007669"/>
    <property type="project" value="InterPro"/>
</dbReference>
<dbReference type="GO" id="GO:0006635">
    <property type="term" value="P:fatty acid beta-oxidation"/>
    <property type="evidence" value="ECO:0007669"/>
    <property type="project" value="UniProtKB-UniRule"/>
</dbReference>
<dbReference type="CDD" id="cd06558">
    <property type="entry name" value="crotonase-like"/>
    <property type="match status" value="1"/>
</dbReference>
<dbReference type="FunFam" id="1.10.1040.50:FF:000001">
    <property type="entry name" value="Fatty acid oxidation complex subunit alpha"/>
    <property type="match status" value="1"/>
</dbReference>
<dbReference type="FunFam" id="3.40.50.720:FF:000009">
    <property type="entry name" value="Fatty oxidation complex, alpha subunit"/>
    <property type="match status" value="1"/>
</dbReference>
<dbReference type="Gene3D" id="1.10.1040.50">
    <property type="match status" value="1"/>
</dbReference>
<dbReference type="Gene3D" id="3.90.226.10">
    <property type="entry name" value="2-enoyl-CoA Hydratase, Chain A, domain 1"/>
    <property type="match status" value="1"/>
</dbReference>
<dbReference type="Gene3D" id="3.40.50.720">
    <property type="entry name" value="NAD(P)-binding Rossmann-like Domain"/>
    <property type="match status" value="1"/>
</dbReference>
<dbReference type="HAMAP" id="MF_01621">
    <property type="entry name" value="FadB"/>
    <property type="match status" value="1"/>
</dbReference>
<dbReference type="InterPro" id="IPR006180">
    <property type="entry name" value="3-OHacyl-CoA_DH_CS"/>
</dbReference>
<dbReference type="InterPro" id="IPR006176">
    <property type="entry name" value="3-OHacyl-CoA_DH_NAD-bd"/>
</dbReference>
<dbReference type="InterPro" id="IPR006108">
    <property type="entry name" value="3HC_DH_C"/>
</dbReference>
<dbReference type="InterPro" id="IPR008927">
    <property type="entry name" value="6-PGluconate_DH-like_C_sf"/>
</dbReference>
<dbReference type="InterPro" id="IPR029045">
    <property type="entry name" value="ClpP/crotonase-like_dom_sf"/>
</dbReference>
<dbReference type="InterPro" id="IPR001753">
    <property type="entry name" value="Enoyl-CoA_hydra/iso"/>
</dbReference>
<dbReference type="InterPro" id="IPR050136">
    <property type="entry name" value="FA_oxidation_alpha_subunit"/>
</dbReference>
<dbReference type="InterPro" id="IPR012799">
    <property type="entry name" value="FadB"/>
</dbReference>
<dbReference type="InterPro" id="IPR036291">
    <property type="entry name" value="NAD(P)-bd_dom_sf"/>
</dbReference>
<dbReference type="NCBIfam" id="TIGR02437">
    <property type="entry name" value="FadB"/>
    <property type="match status" value="1"/>
</dbReference>
<dbReference type="NCBIfam" id="NF008727">
    <property type="entry name" value="PRK11730.1"/>
    <property type="match status" value="1"/>
</dbReference>
<dbReference type="PANTHER" id="PTHR43612">
    <property type="entry name" value="TRIFUNCTIONAL ENZYME SUBUNIT ALPHA"/>
    <property type="match status" value="1"/>
</dbReference>
<dbReference type="PANTHER" id="PTHR43612:SF3">
    <property type="entry name" value="TRIFUNCTIONAL ENZYME SUBUNIT ALPHA, MITOCHONDRIAL"/>
    <property type="match status" value="1"/>
</dbReference>
<dbReference type="Pfam" id="PF00725">
    <property type="entry name" value="3HCDH"/>
    <property type="match status" value="1"/>
</dbReference>
<dbReference type="Pfam" id="PF02737">
    <property type="entry name" value="3HCDH_N"/>
    <property type="match status" value="1"/>
</dbReference>
<dbReference type="Pfam" id="PF00378">
    <property type="entry name" value="ECH_1"/>
    <property type="match status" value="1"/>
</dbReference>
<dbReference type="SUPFAM" id="SSF48179">
    <property type="entry name" value="6-phosphogluconate dehydrogenase C-terminal domain-like"/>
    <property type="match status" value="2"/>
</dbReference>
<dbReference type="SUPFAM" id="SSF52096">
    <property type="entry name" value="ClpP/crotonase"/>
    <property type="match status" value="1"/>
</dbReference>
<dbReference type="SUPFAM" id="SSF51735">
    <property type="entry name" value="NAD(P)-binding Rossmann-fold domains"/>
    <property type="match status" value="1"/>
</dbReference>
<dbReference type="PROSITE" id="PS00067">
    <property type="entry name" value="3HCDH"/>
    <property type="match status" value="1"/>
</dbReference>
<feature type="chain" id="PRO_1000069577" description="Fatty acid oxidation complex subunit alpha">
    <location>
        <begin position="1"/>
        <end position="716"/>
    </location>
</feature>
<feature type="region of interest" description="Enoyl-CoA hydratase/isomerase" evidence="1">
    <location>
        <begin position="1"/>
        <end position="189"/>
    </location>
</feature>
<feature type="region of interest" description="3-hydroxyacyl-CoA dehydrogenase" evidence="1">
    <location>
        <begin position="311"/>
        <end position="716"/>
    </location>
</feature>
<feature type="active site" description="For 3-hydroxyacyl-CoA dehydrogenase activity" evidence="1">
    <location>
        <position position="450"/>
    </location>
</feature>
<feature type="binding site" evidence="1">
    <location>
        <position position="296"/>
    </location>
    <ligand>
        <name>substrate</name>
    </ligand>
</feature>
<feature type="binding site" evidence="1">
    <location>
        <position position="324"/>
    </location>
    <ligand>
        <name>NAD(+)</name>
        <dbReference type="ChEBI" id="CHEBI:57540"/>
    </ligand>
</feature>
<feature type="binding site" evidence="1">
    <location>
        <position position="343"/>
    </location>
    <ligand>
        <name>NAD(+)</name>
        <dbReference type="ChEBI" id="CHEBI:57540"/>
    </ligand>
</feature>
<feature type="binding site" evidence="1">
    <location>
        <begin position="400"/>
        <end position="402"/>
    </location>
    <ligand>
        <name>NAD(+)</name>
        <dbReference type="ChEBI" id="CHEBI:57540"/>
    </ligand>
</feature>
<feature type="binding site" evidence="1">
    <location>
        <position position="407"/>
    </location>
    <ligand>
        <name>NAD(+)</name>
        <dbReference type="ChEBI" id="CHEBI:57540"/>
    </ligand>
</feature>
<feature type="binding site" evidence="1">
    <location>
        <position position="429"/>
    </location>
    <ligand>
        <name>NAD(+)</name>
        <dbReference type="ChEBI" id="CHEBI:57540"/>
    </ligand>
</feature>
<feature type="binding site" evidence="1">
    <location>
        <position position="453"/>
    </location>
    <ligand>
        <name>NAD(+)</name>
        <dbReference type="ChEBI" id="CHEBI:57540"/>
    </ligand>
</feature>
<feature type="binding site" evidence="1">
    <location>
        <position position="500"/>
    </location>
    <ligand>
        <name>substrate</name>
    </ligand>
</feature>
<feature type="binding site" evidence="1">
    <location>
        <position position="660"/>
    </location>
    <ligand>
        <name>substrate</name>
    </ligand>
</feature>
<feature type="site" description="Important for catalytic activity" evidence="1">
    <location>
        <position position="119"/>
    </location>
</feature>
<feature type="site" description="Important for catalytic activity" evidence="1">
    <location>
        <position position="139"/>
    </location>
</feature>
<protein>
    <recommendedName>
        <fullName evidence="1">Fatty acid oxidation complex subunit alpha</fullName>
    </recommendedName>
    <domain>
        <recommendedName>
            <fullName evidence="1">Enoyl-CoA hydratase/Delta(3)-cis-Delta(2)-trans-enoyl-CoA isomerase/3-hydroxybutyryl-CoA epimerase</fullName>
            <ecNumber evidence="1">4.2.1.17</ecNumber>
            <ecNumber evidence="1">5.1.2.3</ecNumber>
            <ecNumber evidence="1">5.3.3.8</ecNumber>
        </recommendedName>
    </domain>
    <domain>
        <recommendedName>
            <fullName evidence="1">3-hydroxyacyl-CoA dehydrogenase</fullName>
            <ecNumber evidence="1">1.1.1.35</ecNumber>
        </recommendedName>
    </domain>
</protein>
<accession>A4Y1B6</accession>
<keyword id="KW-0276">Fatty acid metabolism</keyword>
<keyword id="KW-0413">Isomerase</keyword>
<keyword id="KW-0442">Lipid degradation</keyword>
<keyword id="KW-0443">Lipid metabolism</keyword>
<keyword id="KW-0456">Lyase</keyword>
<keyword id="KW-0511">Multifunctional enzyme</keyword>
<keyword id="KW-0520">NAD</keyword>
<keyword id="KW-0560">Oxidoreductase</keyword>
<organism>
    <name type="scientific">Shewanella putrefaciens (strain CN-32 / ATCC BAA-453)</name>
    <dbReference type="NCBI Taxonomy" id="319224"/>
    <lineage>
        <taxon>Bacteria</taxon>
        <taxon>Pseudomonadati</taxon>
        <taxon>Pseudomonadota</taxon>
        <taxon>Gammaproteobacteria</taxon>
        <taxon>Alteromonadales</taxon>
        <taxon>Shewanellaceae</taxon>
        <taxon>Shewanella</taxon>
    </lineage>
</organism>
<evidence type="ECO:0000255" key="1">
    <source>
        <dbReference type="HAMAP-Rule" id="MF_01621"/>
    </source>
</evidence>
<proteinExistence type="inferred from homology"/>
<comment type="function">
    <text evidence="1">Involved in the aerobic and anaerobic degradation of long-chain fatty acids via beta-oxidation cycle. Catalyzes the formation of 3-oxoacyl-CoA from enoyl-CoA via L-3-hydroxyacyl-CoA. It can also use D-3-hydroxyacyl-CoA and cis-3-enoyl-CoA as substrate.</text>
</comment>
<comment type="catalytic activity">
    <reaction evidence="1">
        <text>a (3S)-3-hydroxyacyl-CoA + NAD(+) = a 3-oxoacyl-CoA + NADH + H(+)</text>
        <dbReference type="Rhea" id="RHEA:22432"/>
        <dbReference type="ChEBI" id="CHEBI:15378"/>
        <dbReference type="ChEBI" id="CHEBI:57318"/>
        <dbReference type="ChEBI" id="CHEBI:57540"/>
        <dbReference type="ChEBI" id="CHEBI:57945"/>
        <dbReference type="ChEBI" id="CHEBI:90726"/>
        <dbReference type="EC" id="1.1.1.35"/>
    </reaction>
</comment>
<comment type="catalytic activity">
    <reaction evidence="1">
        <text>a (3S)-3-hydroxyacyl-CoA = a (2E)-enoyl-CoA + H2O</text>
        <dbReference type="Rhea" id="RHEA:16105"/>
        <dbReference type="ChEBI" id="CHEBI:15377"/>
        <dbReference type="ChEBI" id="CHEBI:57318"/>
        <dbReference type="ChEBI" id="CHEBI:58856"/>
        <dbReference type="EC" id="4.2.1.17"/>
    </reaction>
</comment>
<comment type="catalytic activity">
    <reaction evidence="1">
        <text>a 4-saturated-(3S)-3-hydroxyacyl-CoA = a (3E)-enoyl-CoA + H2O</text>
        <dbReference type="Rhea" id="RHEA:20724"/>
        <dbReference type="ChEBI" id="CHEBI:15377"/>
        <dbReference type="ChEBI" id="CHEBI:58521"/>
        <dbReference type="ChEBI" id="CHEBI:137480"/>
        <dbReference type="EC" id="4.2.1.17"/>
    </reaction>
</comment>
<comment type="catalytic activity">
    <reaction evidence="1">
        <text>(3S)-3-hydroxybutanoyl-CoA = (3R)-3-hydroxybutanoyl-CoA</text>
        <dbReference type="Rhea" id="RHEA:21760"/>
        <dbReference type="ChEBI" id="CHEBI:57315"/>
        <dbReference type="ChEBI" id="CHEBI:57316"/>
        <dbReference type="EC" id="5.1.2.3"/>
    </reaction>
</comment>
<comment type="catalytic activity">
    <reaction evidence="1">
        <text>a (3Z)-enoyl-CoA = a 4-saturated (2E)-enoyl-CoA</text>
        <dbReference type="Rhea" id="RHEA:45900"/>
        <dbReference type="ChEBI" id="CHEBI:85097"/>
        <dbReference type="ChEBI" id="CHEBI:85489"/>
        <dbReference type="EC" id="5.3.3.8"/>
    </reaction>
</comment>
<comment type="catalytic activity">
    <reaction evidence="1">
        <text>a (3E)-enoyl-CoA = a 4-saturated (2E)-enoyl-CoA</text>
        <dbReference type="Rhea" id="RHEA:45228"/>
        <dbReference type="ChEBI" id="CHEBI:58521"/>
        <dbReference type="ChEBI" id="CHEBI:85097"/>
        <dbReference type="EC" id="5.3.3.8"/>
    </reaction>
</comment>
<comment type="pathway">
    <text evidence="1">Lipid metabolism; fatty acid beta-oxidation.</text>
</comment>
<comment type="subunit">
    <text evidence="1">Heterotetramer of two alpha chains (FadB) and two beta chains (FadA).</text>
</comment>
<comment type="similarity">
    <text evidence="1">In the N-terminal section; belongs to the enoyl-CoA hydratase/isomerase family.</text>
</comment>
<comment type="similarity">
    <text evidence="1">In the C-terminal section; belongs to the 3-hydroxyacyl-CoA dehydrogenase family.</text>
</comment>
<gene>
    <name evidence="1" type="primary">fadB</name>
    <name type="ordered locus">Sputcn32_0013</name>
</gene>